<name>HRH1_MOUSE</name>
<reference key="1">
    <citation type="journal article" date="1996" name="Genomics">
        <title>Characteristics of the mouse genomic histamine H1 receptor gene.</title>
        <authorList>
            <person name="Inoue I."/>
            <person name="Taniuchi I."/>
            <person name="Kitamura D."/>
            <person name="Jenkins N.A."/>
            <person name="Gilbert D.J."/>
            <person name="Copeland N.G."/>
            <person name="Watanabe T."/>
        </authorList>
    </citation>
    <scope>NUCLEOTIDE SEQUENCE [GENOMIC DNA]</scope>
    <source>
        <strain>129/Ola</strain>
    </source>
</reference>
<reference key="2">
    <citation type="journal article" date="2002" name="Science">
        <title>Identification of Bphs, an autoimmune disease locus, as histamine receptor H1.</title>
        <authorList>
            <person name="Ma R.Z."/>
            <person name="Gao J."/>
            <person name="Meeker N.D."/>
            <person name="Fillmore P.D."/>
            <person name="Tung K.S.K."/>
            <person name="Watanabe T."/>
            <person name="Zachary J.F."/>
            <person name="Offner H."/>
            <person name="Blankenhorn E.P."/>
            <person name="Teuscher C."/>
        </authorList>
    </citation>
    <scope>NUCLEOTIDE SEQUENCE</scope>
    <scope>VARIANTS LEU-263; MET-312 AND SER-330</scope>
    <source>
        <strain>129/SvJ</strain>
        <strain>A/J</strain>
        <strain>B10.S/DvTe</strain>
        <strain>BALB/cByJ</strain>
        <strain>BALB/cJ</strain>
        <strain>C3H/HeJ</strain>
        <strain>C57BL/6J</strain>
        <strain>CBA/J</strain>
        <strain>DBA/1</strain>
        <strain>DBA/2J</strain>
        <strain>FVB/NCr</strain>
        <strain>NOD</strain>
        <strain>SJL/J</strain>
        <strain>SWR</strain>
        <tissue>Spleen</tissue>
    </source>
</reference>
<reference key="3">
    <citation type="journal article" date="2005" name="Science">
        <title>The transcriptional landscape of the mammalian genome.</title>
        <authorList>
            <person name="Carninci P."/>
            <person name="Kasukawa T."/>
            <person name="Katayama S."/>
            <person name="Gough J."/>
            <person name="Frith M.C."/>
            <person name="Maeda N."/>
            <person name="Oyama R."/>
            <person name="Ravasi T."/>
            <person name="Lenhard B."/>
            <person name="Wells C."/>
            <person name="Kodzius R."/>
            <person name="Shimokawa K."/>
            <person name="Bajic V.B."/>
            <person name="Brenner S.E."/>
            <person name="Batalov S."/>
            <person name="Forrest A.R."/>
            <person name="Zavolan M."/>
            <person name="Davis M.J."/>
            <person name="Wilming L.G."/>
            <person name="Aidinis V."/>
            <person name="Allen J.E."/>
            <person name="Ambesi-Impiombato A."/>
            <person name="Apweiler R."/>
            <person name="Aturaliya R.N."/>
            <person name="Bailey T.L."/>
            <person name="Bansal M."/>
            <person name="Baxter L."/>
            <person name="Beisel K.W."/>
            <person name="Bersano T."/>
            <person name="Bono H."/>
            <person name="Chalk A.M."/>
            <person name="Chiu K.P."/>
            <person name="Choudhary V."/>
            <person name="Christoffels A."/>
            <person name="Clutterbuck D.R."/>
            <person name="Crowe M.L."/>
            <person name="Dalla E."/>
            <person name="Dalrymple B.P."/>
            <person name="de Bono B."/>
            <person name="Della Gatta G."/>
            <person name="di Bernardo D."/>
            <person name="Down T."/>
            <person name="Engstrom P."/>
            <person name="Fagiolini M."/>
            <person name="Faulkner G."/>
            <person name="Fletcher C.F."/>
            <person name="Fukushima T."/>
            <person name="Furuno M."/>
            <person name="Futaki S."/>
            <person name="Gariboldi M."/>
            <person name="Georgii-Hemming P."/>
            <person name="Gingeras T.R."/>
            <person name="Gojobori T."/>
            <person name="Green R.E."/>
            <person name="Gustincich S."/>
            <person name="Harbers M."/>
            <person name="Hayashi Y."/>
            <person name="Hensch T.K."/>
            <person name="Hirokawa N."/>
            <person name="Hill D."/>
            <person name="Huminiecki L."/>
            <person name="Iacono M."/>
            <person name="Ikeo K."/>
            <person name="Iwama A."/>
            <person name="Ishikawa T."/>
            <person name="Jakt M."/>
            <person name="Kanapin A."/>
            <person name="Katoh M."/>
            <person name="Kawasawa Y."/>
            <person name="Kelso J."/>
            <person name="Kitamura H."/>
            <person name="Kitano H."/>
            <person name="Kollias G."/>
            <person name="Krishnan S.P."/>
            <person name="Kruger A."/>
            <person name="Kummerfeld S.K."/>
            <person name="Kurochkin I.V."/>
            <person name="Lareau L.F."/>
            <person name="Lazarevic D."/>
            <person name="Lipovich L."/>
            <person name="Liu J."/>
            <person name="Liuni S."/>
            <person name="McWilliam S."/>
            <person name="Madan Babu M."/>
            <person name="Madera M."/>
            <person name="Marchionni L."/>
            <person name="Matsuda H."/>
            <person name="Matsuzawa S."/>
            <person name="Miki H."/>
            <person name="Mignone F."/>
            <person name="Miyake S."/>
            <person name="Morris K."/>
            <person name="Mottagui-Tabar S."/>
            <person name="Mulder N."/>
            <person name="Nakano N."/>
            <person name="Nakauchi H."/>
            <person name="Ng P."/>
            <person name="Nilsson R."/>
            <person name="Nishiguchi S."/>
            <person name="Nishikawa S."/>
            <person name="Nori F."/>
            <person name="Ohara O."/>
            <person name="Okazaki Y."/>
            <person name="Orlando V."/>
            <person name="Pang K.C."/>
            <person name="Pavan W.J."/>
            <person name="Pavesi G."/>
            <person name="Pesole G."/>
            <person name="Petrovsky N."/>
            <person name="Piazza S."/>
            <person name="Reed J."/>
            <person name="Reid J.F."/>
            <person name="Ring B.Z."/>
            <person name="Ringwald M."/>
            <person name="Rost B."/>
            <person name="Ruan Y."/>
            <person name="Salzberg S.L."/>
            <person name="Sandelin A."/>
            <person name="Schneider C."/>
            <person name="Schoenbach C."/>
            <person name="Sekiguchi K."/>
            <person name="Semple C.A."/>
            <person name="Seno S."/>
            <person name="Sessa L."/>
            <person name="Sheng Y."/>
            <person name="Shibata Y."/>
            <person name="Shimada H."/>
            <person name="Shimada K."/>
            <person name="Silva D."/>
            <person name="Sinclair B."/>
            <person name="Sperling S."/>
            <person name="Stupka E."/>
            <person name="Sugiura K."/>
            <person name="Sultana R."/>
            <person name="Takenaka Y."/>
            <person name="Taki K."/>
            <person name="Tammoja K."/>
            <person name="Tan S.L."/>
            <person name="Tang S."/>
            <person name="Taylor M.S."/>
            <person name="Tegner J."/>
            <person name="Teichmann S.A."/>
            <person name="Ueda H.R."/>
            <person name="van Nimwegen E."/>
            <person name="Verardo R."/>
            <person name="Wei C.L."/>
            <person name="Yagi K."/>
            <person name="Yamanishi H."/>
            <person name="Zabarovsky E."/>
            <person name="Zhu S."/>
            <person name="Zimmer A."/>
            <person name="Hide W."/>
            <person name="Bult C."/>
            <person name="Grimmond S.M."/>
            <person name="Teasdale R.D."/>
            <person name="Liu E.T."/>
            <person name="Brusic V."/>
            <person name="Quackenbush J."/>
            <person name="Wahlestedt C."/>
            <person name="Mattick J.S."/>
            <person name="Hume D.A."/>
            <person name="Kai C."/>
            <person name="Sasaki D."/>
            <person name="Tomaru Y."/>
            <person name="Fukuda S."/>
            <person name="Kanamori-Katayama M."/>
            <person name="Suzuki M."/>
            <person name="Aoki J."/>
            <person name="Arakawa T."/>
            <person name="Iida J."/>
            <person name="Imamura K."/>
            <person name="Itoh M."/>
            <person name="Kato T."/>
            <person name="Kawaji H."/>
            <person name="Kawagashira N."/>
            <person name="Kawashima T."/>
            <person name="Kojima M."/>
            <person name="Kondo S."/>
            <person name="Konno H."/>
            <person name="Nakano K."/>
            <person name="Ninomiya N."/>
            <person name="Nishio T."/>
            <person name="Okada M."/>
            <person name="Plessy C."/>
            <person name="Shibata K."/>
            <person name="Shiraki T."/>
            <person name="Suzuki S."/>
            <person name="Tagami M."/>
            <person name="Waki K."/>
            <person name="Watahiki A."/>
            <person name="Okamura-Oho Y."/>
            <person name="Suzuki H."/>
            <person name="Kawai J."/>
            <person name="Hayashizaki Y."/>
        </authorList>
    </citation>
    <scope>NUCLEOTIDE SEQUENCE [LARGE SCALE MRNA]</scope>
    <source>
        <strain>C57BL/6J</strain>
        <tissue>Adipose tissue</tissue>
        <tissue>Cerebellum</tissue>
        <tissue>Hypothalamus</tissue>
        <tissue>Mesonephros</tissue>
    </source>
</reference>
<reference key="4">
    <citation type="journal article" date="1996" name="Proc. Natl. Acad. Sci. U.S.A.">
        <title>Impaired locomotor activity and exploratory behavior in mice lacking histamine H1 receptors.</title>
        <authorList>
            <person name="Inoue I."/>
            <person name="Yanai K."/>
            <person name="Kitamura D."/>
            <person name="Taniuchi I."/>
            <person name="Kobayashi T."/>
            <person name="Niimura K."/>
            <person name="Watanabe T."/>
            <person name="Watanabe T."/>
        </authorList>
    </citation>
    <scope>FUNCTION</scope>
    <scope>SUBCELLULAR LOCATION</scope>
    <scope>DISRUPTION PHENOTYPE</scope>
</reference>
<reference key="5">
    <citation type="journal article" date="2003" name="Infect. Immun.">
        <title>Analysis of the role of Bphs/Hrh1 in the genetic control of responsiveness to pertussis toxin.</title>
        <authorList>
            <person name="Gao J.F."/>
            <person name="Call S.B."/>
            <person name="Fillmore P.D."/>
            <person name="Watanabe T."/>
            <person name="Meeker N.D."/>
            <person name="Teuscher C."/>
        </authorList>
    </citation>
    <scope>FUNCTION</scope>
    <scope>DISRUPTION PHENOTYPE</scope>
</reference>
<reference key="6">
    <citation type="journal article" date="2007" name="Neurosci. Res.">
        <title>Selective cognitive dysfunction in mice lacking histamine H1 and H2 receptors.</title>
        <authorList>
            <person name="Dai H."/>
            <person name="Kaneko K."/>
            <person name="Kato H."/>
            <person name="Fujii S."/>
            <person name="Jing Y."/>
            <person name="Xu A."/>
            <person name="Sakurai E."/>
            <person name="Kato M."/>
            <person name="Okamura N."/>
            <person name="Kuramasu A."/>
            <person name="Yanai K."/>
        </authorList>
    </citation>
    <scope>FUNCTION</scope>
    <scope>DISRUPTION PHENOTYPE</scope>
</reference>
<reference key="7">
    <citation type="journal article" date="2010" name="Cell">
        <title>A tissue-specific atlas of mouse protein phosphorylation and expression.</title>
        <authorList>
            <person name="Huttlin E.L."/>
            <person name="Jedrychowski M.P."/>
            <person name="Elias J.E."/>
            <person name="Goswami T."/>
            <person name="Rad R."/>
            <person name="Beausoleil S.A."/>
            <person name="Villen J."/>
            <person name="Haas W."/>
            <person name="Sowa M.E."/>
            <person name="Gygi S.P."/>
        </authorList>
    </citation>
    <scope>PHOSPHORYLATION [LARGE SCALE ANALYSIS] AT SER-344; SER-347; SER-381 AND SER-383</scope>
    <scope>IDENTIFICATION BY MASS SPECTROMETRY [LARGE SCALE ANALYSIS]</scope>
    <source>
        <tissue>Brain</tissue>
    </source>
</reference>
<comment type="function">
    <text evidence="1 6 7 8">G-protein-coupled receptor for histamine, a biogenic amine that functions as an immune modulator and a neurotransmitter (By similarity). Through the H1 receptor, histamine mediates the contraction of smooth muscles and increases capillary permeability due to contraction of terminal venules (PubMed:12595443). Also mediates neurotransmission in the central nervous system and thereby regulates circadian rhythms, emotional and locomotor activities as well as cognitive functions (PubMed:17145090, PubMed:8917588).</text>
</comment>
<comment type="subcellular location">
    <subcellularLocation>
        <location evidence="8">Cell membrane</location>
        <topology evidence="1">Multi-pass membrane protein</topology>
    </subcellularLocation>
</comment>
<comment type="domain">
    <text evidence="1">Histamine activates the receptor by forming hydrogen bonds with transmembrane domains 3 and 6, squashing the ligand-binding pocket on the extracellular side and opening the cavity for G-protein engagement on the intracellular side.</text>
</comment>
<comment type="PTM">
    <text evidence="1">Phosphorylation at sites in the second and third cytoplasmic loops independently contribute to agonist-induced receptor down-regulation.</text>
</comment>
<comment type="polymorphism">
    <text evidence="5">Strains C3H/HeJ and CBA/J are resistant to vasoactive amine sensitization elicited by histamine (VAASH) which is induced by pertussis toxin.</text>
</comment>
<comment type="disruption phenotype">
    <text evidence="6 7 8">Mice lacking Hrh1 develop normally and are apparently healthy and fertile. However, they display perturbations in the control of circadian rhythm and locomotor activities related to emotion (PubMed:8917588). Learning and memory processes are also affected in these mice (PubMed:17145090). They also display decreased sensitivity to the toxic effects of pertussis toxin (PubMed:12595443).</text>
</comment>
<comment type="similarity">
    <text evidence="3">Belongs to the G-protein coupled receptor 1 family.</text>
</comment>
<keyword id="KW-0090">Biological rhythms</keyword>
<keyword id="KW-1003">Cell membrane</keyword>
<keyword id="KW-1015">Disulfide bond</keyword>
<keyword id="KW-0297">G-protein coupled receptor</keyword>
<keyword id="KW-0325">Glycoprotein</keyword>
<keyword id="KW-0472">Membrane</keyword>
<keyword id="KW-0597">Phosphoprotein</keyword>
<keyword id="KW-0675">Receptor</keyword>
<keyword id="KW-1185">Reference proteome</keyword>
<keyword id="KW-0807">Transducer</keyword>
<keyword id="KW-0812">Transmembrane</keyword>
<keyword id="KW-1133">Transmembrane helix</keyword>
<evidence type="ECO:0000250" key="1">
    <source>
        <dbReference type="UniProtKB" id="P35367"/>
    </source>
</evidence>
<evidence type="ECO:0000255" key="2"/>
<evidence type="ECO:0000255" key="3">
    <source>
        <dbReference type="PROSITE-ProRule" id="PRU00521"/>
    </source>
</evidence>
<evidence type="ECO:0000256" key="4">
    <source>
        <dbReference type="SAM" id="MobiDB-lite"/>
    </source>
</evidence>
<evidence type="ECO:0000269" key="5">
    <source>
    </source>
</evidence>
<evidence type="ECO:0000269" key="6">
    <source>
    </source>
</evidence>
<evidence type="ECO:0000269" key="7">
    <source>
    </source>
</evidence>
<evidence type="ECO:0000269" key="8">
    <source>
    </source>
</evidence>
<evidence type="ECO:0000303" key="9">
    <source>
    </source>
</evidence>
<evidence type="ECO:0000303" key="10">
    <source>
    </source>
</evidence>
<evidence type="ECO:0000303" key="11">
    <source>
    </source>
</evidence>
<evidence type="ECO:0000305" key="12"/>
<evidence type="ECO:0000312" key="13">
    <source>
        <dbReference type="MGI" id="MGI:107619"/>
    </source>
</evidence>
<evidence type="ECO:0007744" key="14">
    <source>
    </source>
</evidence>
<protein>
    <recommendedName>
        <fullName evidence="10">Histamine H1 receptor</fullName>
        <shortName evidence="11">H1R</shortName>
        <shortName>HH1R</shortName>
    </recommendedName>
</protein>
<feature type="chain" id="PRO_0000069677" description="Histamine H1 receptor">
    <location>
        <begin position="1"/>
        <end position="488"/>
    </location>
</feature>
<feature type="topological domain" description="Extracellular" evidence="12">
    <location>
        <begin position="1"/>
        <end position="29"/>
    </location>
</feature>
<feature type="transmembrane region" description="Helical; Name=1" evidence="1">
    <location>
        <begin position="30"/>
        <end position="50"/>
    </location>
</feature>
<feature type="topological domain" description="Cytoplasmic" evidence="12">
    <location>
        <begin position="51"/>
        <end position="64"/>
    </location>
</feature>
<feature type="transmembrane region" description="Helical; Name=2" evidence="1">
    <location>
        <begin position="65"/>
        <end position="89"/>
    </location>
</feature>
<feature type="topological domain" description="Extracellular" evidence="12">
    <location>
        <begin position="90"/>
        <end position="97"/>
    </location>
</feature>
<feature type="transmembrane region" description="Helical; Name=3" evidence="1">
    <location>
        <begin position="98"/>
        <end position="123"/>
    </location>
</feature>
<feature type="topological domain" description="Cytoplasmic" evidence="12">
    <location>
        <begin position="124"/>
        <end position="144"/>
    </location>
</feature>
<feature type="transmembrane region" description="Helical; Name=4" evidence="1">
    <location>
        <begin position="145"/>
        <end position="164"/>
    </location>
</feature>
<feature type="topological domain" description="Extracellular" evidence="12">
    <location>
        <begin position="165"/>
        <end position="188"/>
    </location>
</feature>
<feature type="transmembrane region" description="Helical; Name=5" evidence="1">
    <location>
        <begin position="189"/>
        <end position="211"/>
    </location>
</feature>
<feature type="topological domain" description="Cytoplasmic" evidence="12">
    <location>
        <begin position="212"/>
        <end position="417"/>
    </location>
</feature>
<feature type="transmembrane region" description="Helical; Name=6" evidence="1">
    <location>
        <begin position="418"/>
        <end position="441"/>
    </location>
</feature>
<feature type="topological domain" description="Extracellular" evidence="12">
    <location>
        <begin position="442"/>
        <end position="447"/>
    </location>
</feature>
<feature type="transmembrane region" description="Helical; Name=7" evidence="1">
    <location>
        <begin position="448"/>
        <end position="470"/>
    </location>
</feature>
<feature type="topological domain" description="Cytoplasmic" evidence="12">
    <location>
        <begin position="471"/>
        <end position="488"/>
    </location>
</feature>
<feature type="region of interest" description="Important for agonist binding" evidence="1">
    <location>
        <begin position="107"/>
        <end position="112"/>
    </location>
</feature>
<feature type="region of interest" description="Disordered" evidence="4">
    <location>
        <begin position="245"/>
        <end position="337"/>
    </location>
</feature>
<feature type="region of interest" description="Important for agonist binding" evidence="1">
    <location>
        <begin position="425"/>
        <end position="429"/>
    </location>
</feature>
<feature type="compositionally biased region" description="Polar residues" evidence="4">
    <location>
        <begin position="322"/>
        <end position="337"/>
    </location>
</feature>
<feature type="binding site" evidence="1">
    <location>
        <position position="107"/>
    </location>
    <ligand>
        <name>histamine</name>
        <dbReference type="ChEBI" id="CHEBI:58432"/>
    </ligand>
</feature>
<feature type="binding site" evidence="1">
    <location>
        <position position="112"/>
    </location>
    <ligand>
        <name>histamine</name>
        <dbReference type="ChEBI" id="CHEBI:58432"/>
    </ligand>
</feature>
<feature type="binding site" evidence="1">
    <location>
        <position position="198"/>
    </location>
    <ligand>
        <name>histamine</name>
        <dbReference type="ChEBI" id="CHEBI:58432"/>
    </ligand>
</feature>
<feature type="binding site" evidence="1">
    <location>
        <position position="432"/>
    </location>
    <ligand>
        <name>histamine</name>
        <dbReference type="ChEBI" id="CHEBI:58432"/>
    </ligand>
</feature>
<feature type="modified residue" description="Phosphothreonine" evidence="1">
    <location>
        <position position="140"/>
    </location>
</feature>
<feature type="modified residue" description="Phosphothreonine" evidence="1">
    <location>
        <position position="142"/>
    </location>
</feature>
<feature type="modified residue" description="Phosphoserine" evidence="1">
    <location>
        <position position="230"/>
    </location>
</feature>
<feature type="modified residue" description="Phosphoserine" evidence="14">
    <location>
        <position position="344"/>
    </location>
</feature>
<feature type="modified residue" description="Phosphoserine" evidence="14">
    <location>
        <position position="347"/>
    </location>
</feature>
<feature type="modified residue" description="Phosphoserine" evidence="14">
    <location>
        <position position="381"/>
    </location>
</feature>
<feature type="modified residue" description="Phosphoserine" evidence="14">
    <location>
        <position position="383"/>
    </location>
</feature>
<feature type="modified residue" description="Phosphoserine" evidence="1">
    <location>
        <position position="397"/>
    </location>
</feature>
<feature type="modified residue" description="Phosphoserine" evidence="1">
    <location>
        <position position="399"/>
    </location>
</feature>
<feature type="glycosylation site" description="N-linked (GlcNAc...) asparagine" evidence="2">
    <location>
        <position position="5"/>
    </location>
</feature>
<feature type="glycosylation site" description="N-linked (GlcNAc...) asparagine" evidence="2">
    <location>
        <position position="18"/>
    </location>
</feature>
<feature type="disulfide bond" evidence="3">
    <location>
        <begin position="100"/>
        <end position="180"/>
    </location>
</feature>
<feature type="disulfide bond" evidence="3">
    <location>
        <begin position="442"/>
        <end position="445"/>
    </location>
</feature>
<feature type="sequence variant" description="In strain: C3H/HeJ and CBA/J." evidence="5">
    <original>P</original>
    <variation>L</variation>
    <location>
        <position position="263"/>
    </location>
</feature>
<feature type="sequence variant" description="In strain: C3H/HeJ and CBA/J." evidence="5">
    <original>V</original>
    <variation>M</variation>
    <location>
        <position position="312"/>
    </location>
</feature>
<feature type="sequence variant" description="In strain: C3H/HeJ and CBA/J." evidence="5">
    <original>P</original>
    <variation>S</variation>
    <location>
        <position position="330"/>
    </location>
</feature>
<feature type="sequence conflict" description="In Ref. 1; BAA08791." evidence="12" ref="1">
    <original>S</original>
    <variation>R</variation>
    <location>
        <position position="2"/>
    </location>
</feature>
<feature type="sequence conflict" description="In Ref. 1; BAA08791." evidence="12" ref="1">
    <original>L</original>
    <variation>G</variation>
    <location>
        <position position="47"/>
    </location>
</feature>
<feature type="sequence conflict" description="In Ref. 1; BAA08791." evidence="12" ref="1">
    <original>V</original>
    <variation>I</variation>
    <location>
        <position position="79"/>
    </location>
</feature>
<feature type="sequence conflict" description="In Ref. 1; BAA08791." evidence="12" ref="1">
    <original>KA</original>
    <variation>NG</variation>
    <location>
        <begin position="215"/>
        <end position="216"/>
    </location>
</feature>
<feature type="sequence conflict" description="In Ref. 1; BAA08791." evidence="12" ref="1">
    <original>R</original>
    <variation>P</variation>
    <location>
        <position position="224"/>
    </location>
</feature>
<feature type="sequence conflict" description="In Ref. 2; AAK66778." evidence="12" ref="2">
    <original>E</original>
    <variation>D</variation>
    <location>
        <position position="242"/>
    </location>
</feature>
<feature type="sequence conflict" description="In Ref. 1; BAA08791." evidence="12" ref="1">
    <original>A</original>
    <variation>S</variation>
    <location>
        <position position="244"/>
    </location>
</feature>
<feature type="sequence conflict" description="In Ref. 1; BAA08791." evidence="12" ref="1">
    <original>K</original>
    <variation>T</variation>
    <location>
        <position position="261"/>
    </location>
</feature>
<feature type="sequence conflict" description="In Ref. 1; BAA08791." evidence="12" ref="1">
    <original>E</original>
    <variation>A</variation>
    <location>
        <position position="278"/>
    </location>
</feature>
<feature type="sequence conflict" description="In Ref. 1; BAA08791." evidence="12" ref="1">
    <original>S</original>
    <variation>R</variation>
    <location>
        <position position="379"/>
    </location>
</feature>
<dbReference type="EMBL" id="D50095">
    <property type="protein sequence ID" value="BAA08791.1"/>
    <property type="molecule type" value="Genomic_DNA"/>
</dbReference>
<dbReference type="EMBL" id="AF387890">
    <property type="protein sequence ID" value="AAK71654.1"/>
    <property type="molecule type" value="mRNA"/>
</dbReference>
<dbReference type="EMBL" id="AF387891">
    <property type="protein sequence ID" value="AAK71655.1"/>
    <property type="molecule type" value="mRNA"/>
</dbReference>
<dbReference type="EMBL" id="AF387892">
    <property type="protein sequence ID" value="AAK71656.1"/>
    <property type="molecule type" value="mRNA"/>
</dbReference>
<dbReference type="EMBL" id="AF387893">
    <property type="protein sequence ID" value="AAK71657.1"/>
    <property type="molecule type" value="mRNA"/>
</dbReference>
<dbReference type="EMBL" id="AF387894">
    <property type="protein sequence ID" value="AAK71658.1"/>
    <property type="molecule type" value="mRNA"/>
</dbReference>
<dbReference type="EMBL" id="AF387895">
    <property type="protein sequence ID" value="AAK71659.1"/>
    <property type="molecule type" value="mRNA"/>
</dbReference>
<dbReference type="EMBL" id="AF387896">
    <property type="protein sequence ID" value="AAK71660.1"/>
    <property type="molecule type" value="mRNA"/>
</dbReference>
<dbReference type="EMBL" id="AF388052">
    <property type="protein sequence ID" value="AAK66774.2"/>
    <property type="molecule type" value="mRNA"/>
</dbReference>
<dbReference type="EMBL" id="AF388053">
    <property type="protein sequence ID" value="AAK66775.1"/>
    <property type="molecule type" value="mRNA"/>
</dbReference>
<dbReference type="EMBL" id="AF388054">
    <property type="protein sequence ID" value="AAK66776.1"/>
    <property type="molecule type" value="mRNA"/>
</dbReference>
<dbReference type="EMBL" id="AF388055">
    <property type="protein sequence ID" value="AAK66777.1"/>
    <property type="molecule type" value="mRNA"/>
</dbReference>
<dbReference type="EMBL" id="AF388056">
    <property type="protein sequence ID" value="AAK66778.1"/>
    <property type="molecule type" value="mRNA"/>
</dbReference>
<dbReference type="EMBL" id="AF388057">
    <property type="protein sequence ID" value="AAK66779.1"/>
    <property type="molecule type" value="mRNA"/>
</dbReference>
<dbReference type="EMBL" id="AF388058">
    <property type="protein sequence ID" value="AAK66780.1"/>
    <property type="molecule type" value="mRNA"/>
</dbReference>
<dbReference type="EMBL" id="AK032763">
    <property type="protein sequence ID" value="BAC28011.1"/>
    <property type="molecule type" value="mRNA"/>
</dbReference>
<dbReference type="EMBL" id="AK038480">
    <property type="protein sequence ID" value="BAC30013.1"/>
    <property type="molecule type" value="mRNA"/>
</dbReference>
<dbReference type="EMBL" id="AK046607">
    <property type="protein sequence ID" value="BAC32805.1"/>
    <property type="molecule type" value="mRNA"/>
</dbReference>
<dbReference type="EMBL" id="AK047070">
    <property type="protein sequence ID" value="BAC32950.1"/>
    <property type="molecule type" value="mRNA"/>
</dbReference>
<dbReference type="CCDS" id="CCDS20435.1"/>
<dbReference type="RefSeq" id="NP_001239571.1">
    <property type="nucleotide sequence ID" value="NM_001252642.3"/>
</dbReference>
<dbReference type="RefSeq" id="NP_001239572.1">
    <property type="nucleotide sequence ID" value="NM_001252643.3"/>
</dbReference>
<dbReference type="RefSeq" id="NP_001304053.1">
    <property type="nucleotide sequence ID" value="NM_001317124.2"/>
</dbReference>
<dbReference type="RefSeq" id="NP_001304054.1">
    <property type="nucleotide sequence ID" value="NM_001317125.2"/>
</dbReference>
<dbReference type="RefSeq" id="NP_001304055.1">
    <property type="nucleotide sequence ID" value="NM_001317126.2"/>
</dbReference>
<dbReference type="RefSeq" id="NP_001396960.1">
    <property type="nucleotide sequence ID" value="NM_001410031.1"/>
</dbReference>
<dbReference type="RefSeq" id="NP_032311.2">
    <property type="nucleotide sequence ID" value="NM_008285.4"/>
</dbReference>
<dbReference type="SMR" id="P70174"/>
<dbReference type="BioGRID" id="200419">
    <property type="interactions" value="1"/>
</dbReference>
<dbReference type="FunCoup" id="P70174">
    <property type="interactions" value="1028"/>
</dbReference>
<dbReference type="STRING" id="10090.ENSMUSP00000086383"/>
<dbReference type="BindingDB" id="P70174"/>
<dbReference type="ChEMBL" id="CHEMBL4322"/>
<dbReference type="DrugBank" id="DB11160">
    <property type="generic name" value="Phenyltoloxamine"/>
</dbReference>
<dbReference type="DrugBank" id="DB00512">
    <property type="generic name" value="Vancomycin"/>
</dbReference>
<dbReference type="GlyCosmos" id="P70174">
    <property type="glycosylation" value="2 sites, No reported glycans"/>
</dbReference>
<dbReference type="GlyGen" id="P70174">
    <property type="glycosylation" value="2 sites, 1 N-linked glycan (1 site)"/>
</dbReference>
<dbReference type="iPTMnet" id="P70174"/>
<dbReference type="PhosphoSitePlus" id="P70174"/>
<dbReference type="jPOST" id="P70174"/>
<dbReference type="PaxDb" id="10090-ENSMUSP00000086383"/>
<dbReference type="ProteomicsDB" id="273382"/>
<dbReference type="Antibodypedia" id="10679">
    <property type="antibodies" value="538 antibodies from 37 providers"/>
</dbReference>
<dbReference type="DNASU" id="15465"/>
<dbReference type="Ensembl" id="ENSMUST00000088987.3">
    <property type="protein sequence ID" value="ENSMUSP00000086383.3"/>
    <property type="gene ID" value="ENSMUSG00000053004.10"/>
</dbReference>
<dbReference type="Ensembl" id="ENSMUST00000160780.2">
    <property type="protein sequence ID" value="ENSMUSP00000124320.2"/>
    <property type="gene ID" value="ENSMUSG00000053004.10"/>
</dbReference>
<dbReference type="Ensembl" id="ENSMUST00000161220.2">
    <property type="protein sequence ID" value="ENSMUSP00000124037.2"/>
    <property type="gene ID" value="ENSMUSG00000053004.10"/>
</dbReference>
<dbReference type="Ensembl" id="ENSMUST00000161650.3">
    <property type="protein sequence ID" value="ENSMUSP00000124460.2"/>
    <property type="gene ID" value="ENSMUSG00000053004.10"/>
</dbReference>
<dbReference type="GeneID" id="15465"/>
<dbReference type="KEGG" id="mmu:15465"/>
<dbReference type="UCSC" id="uc009dhw.1">
    <property type="organism name" value="mouse"/>
</dbReference>
<dbReference type="AGR" id="MGI:107619"/>
<dbReference type="CTD" id="3269"/>
<dbReference type="MGI" id="MGI:107619">
    <property type="gene designation" value="Hrh1"/>
</dbReference>
<dbReference type="VEuPathDB" id="HostDB:ENSMUSG00000053004"/>
<dbReference type="eggNOG" id="KOG4220">
    <property type="taxonomic scope" value="Eukaryota"/>
</dbReference>
<dbReference type="GeneTree" id="ENSGT00940000160690"/>
<dbReference type="HOGENOM" id="CLU_009579_11_2_1"/>
<dbReference type="InParanoid" id="P70174"/>
<dbReference type="OMA" id="ITFMVMA"/>
<dbReference type="OrthoDB" id="10071887at2759"/>
<dbReference type="PhylomeDB" id="P70174"/>
<dbReference type="TreeFam" id="TF333432"/>
<dbReference type="Reactome" id="R-MMU-390650">
    <property type="pathway name" value="Histamine receptors"/>
</dbReference>
<dbReference type="Reactome" id="R-MMU-416476">
    <property type="pathway name" value="G alpha (q) signalling events"/>
</dbReference>
<dbReference type="BioGRID-ORCS" id="15465">
    <property type="hits" value="2 hits in 78 CRISPR screens"/>
</dbReference>
<dbReference type="PRO" id="PR:P70174"/>
<dbReference type="Proteomes" id="UP000000589">
    <property type="component" value="Chromosome 6"/>
</dbReference>
<dbReference type="RNAct" id="P70174">
    <property type="molecule type" value="protein"/>
</dbReference>
<dbReference type="Bgee" id="ENSMUSG00000053004">
    <property type="expression patterns" value="Expressed in subparaventricular zone and 78 other cell types or tissues"/>
</dbReference>
<dbReference type="ExpressionAtlas" id="P70174">
    <property type="expression patterns" value="baseline and differential"/>
</dbReference>
<dbReference type="GO" id="GO:0005829">
    <property type="term" value="C:cytosol"/>
    <property type="evidence" value="ECO:0007669"/>
    <property type="project" value="Ensembl"/>
</dbReference>
<dbReference type="GO" id="GO:0005886">
    <property type="term" value="C:plasma membrane"/>
    <property type="evidence" value="ECO:0000250"/>
    <property type="project" value="UniProtKB"/>
</dbReference>
<dbReference type="GO" id="GO:0015085">
    <property type="term" value="F:calcium ion transmembrane transporter activity"/>
    <property type="evidence" value="ECO:0000266"/>
    <property type="project" value="MGI"/>
</dbReference>
<dbReference type="GO" id="GO:0004969">
    <property type="term" value="F:histamine receptor activity"/>
    <property type="evidence" value="ECO:0000250"/>
    <property type="project" value="UniProtKB"/>
</dbReference>
<dbReference type="GO" id="GO:0070509">
    <property type="term" value="P:calcium ion import"/>
    <property type="evidence" value="ECO:0000266"/>
    <property type="project" value="MGI"/>
</dbReference>
<dbReference type="GO" id="GO:0071420">
    <property type="term" value="P:cellular response to histamine"/>
    <property type="evidence" value="ECO:0000250"/>
    <property type="project" value="UniProtKB"/>
</dbReference>
<dbReference type="GO" id="GO:0007186">
    <property type="term" value="P:G protein-coupled receptor signaling pathway"/>
    <property type="evidence" value="ECO:0000250"/>
    <property type="project" value="UniProtKB"/>
</dbReference>
<dbReference type="GO" id="GO:0071421">
    <property type="term" value="P:manganese ion transmembrane transport"/>
    <property type="evidence" value="ECO:0000266"/>
    <property type="project" value="MGI"/>
</dbReference>
<dbReference type="GO" id="GO:0007613">
    <property type="term" value="P:memory"/>
    <property type="evidence" value="ECO:0000315"/>
    <property type="project" value="MGI"/>
</dbReference>
<dbReference type="GO" id="GO:0045907">
    <property type="term" value="P:positive regulation of vasoconstriction"/>
    <property type="evidence" value="ECO:0007669"/>
    <property type="project" value="InterPro"/>
</dbReference>
<dbReference type="GO" id="GO:0048167">
    <property type="term" value="P:regulation of synaptic plasticity"/>
    <property type="evidence" value="ECO:0000315"/>
    <property type="project" value="MGI"/>
</dbReference>
<dbReference type="GO" id="GO:0043114">
    <property type="term" value="P:regulation of vascular permeability"/>
    <property type="evidence" value="ECO:0007669"/>
    <property type="project" value="InterPro"/>
</dbReference>
<dbReference type="GO" id="GO:0048511">
    <property type="term" value="P:rhythmic process"/>
    <property type="evidence" value="ECO:0007669"/>
    <property type="project" value="UniProtKB-KW"/>
</dbReference>
<dbReference type="GO" id="GO:0008542">
    <property type="term" value="P:visual learning"/>
    <property type="evidence" value="ECO:0000315"/>
    <property type="project" value="MGI"/>
</dbReference>
<dbReference type="CDD" id="cd15050">
    <property type="entry name" value="7tmA_Histamine_H1R"/>
    <property type="match status" value="1"/>
</dbReference>
<dbReference type="FunFam" id="1.20.1070.10:FF:000147">
    <property type="entry name" value="Histamine H1 receptor"/>
    <property type="match status" value="1"/>
</dbReference>
<dbReference type="FunFam" id="1.20.1070.10:FF:000189">
    <property type="entry name" value="Histamine H1 receptor"/>
    <property type="match status" value="1"/>
</dbReference>
<dbReference type="Gene3D" id="1.20.1070.10">
    <property type="entry name" value="Rhodopsin 7-helix transmembrane proteins"/>
    <property type="match status" value="2"/>
</dbReference>
<dbReference type="InterPro" id="IPR000276">
    <property type="entry name" value="GPCR_Rhodpsn"/>
</dbReference>
<dbReference type="InterPro" id="IPR017452">
    <property type="entry name" value="GPCR_Rhodpsn_7TM"/>
</dbReference>
<dbReference type="InterPro" id="IPR000921">
    <property type="entry name" value="Histamine_H1_rcpt"/>
</dbReference>
<dbReference type="PANTHER" id="PTHR24248">
    <property type="entry name" value="ADRENERGIC RECEPTOR-RELATED G-PROTEIN COUPLED RECEPTOR"/>
    <property type="match status" value="1"/>
</dbReference>
<dbReference type="PANTHER" id="PTHR24248:SF204">
    <property type="entry name" value="HISTAMINE H1 RECEPTOR"/>
    <property type="match status" value="1"/>
</dbReference>
<dbReference type="Pfam" id="PF00001">
    <property type="entry name" value="7tm_1"/>
    <property type="match status" value="1"/>
</dbReference>
<dbReference type="PRINTS" id="PR00237">
    <property type="entry name" value="GPCRRHODOPSN"/>
</dbReference>
<dbReference type="PRINTS" id="PR00530">
    <property type="entry name" value="HISTAMINEH1R"/>
</dbReference>
<dbReference type="SMART" id="SM01381">
    <property type="entry name" value="7TM_GPCR_Srsx"/>
    <property type="match status" value="1"/>
</dbReference>
<dbReference type="SUPFAM" id="SSF81321">
    <property type="entry name" value="Family A G protein-coupled receptor-like"/>
    <property type="match status" value="1"/>
</dbReference>
<dbReference type="PROSITE" id="PS00237">
    <property type="entry name" value="G_PROTEIN_RECEP_F1_1"/>
    <property type="match status" value="1"/>
</dbReference>
<dbReference type="PROSITE" id="PS50262">
    <property type="entry name" value="G_PROTEIN_RECEP_F1_2"/>
    <property type="match status" value="1"/>
</dbReference>
<sequence length="488" mass="55682">MSLPNTSSASEDKMCEGNRTAMASPQLLPLVVVLSSISLVTVGLNLLVLYAVRSERKLHTVGNLYIVSLSVADLIVGAVVMPMNILYLIMTKWSLGRPLCLFWLSMDYVASTASIFSVFILCIDRYRSVQQPLRYLRYRTKTRASATILGAWFLSFLWVIPILGWHHFTPLAPELREDKCETDFYNVTWFKIMTAIINFYLPTLLMLWFYVKIYKAVRRHCQHRQLTNGSLPTFLEIKLRSEDAKEGAKKPGKESPWGVQKRPSRDPTGGLDQKSTSEDPKVTSPTVFSQEGERETVTRPCFRLDVMQTQPVPEGDARGSKANDQTLSQPKMDEQSLSTCRRISETSEDQTLVDRQSFSRTTDSDTSIEPGLGKVKARSRSNSGLDYIKVTWKRLRSHSRQYVSGLHLNRERKAAKQLGCIMAAFILCWIPYFIFFMVIAFCNSCCSEPVHMFTIWLGYINSTLNPLIYPLCNENFKKTFKKILHIRS</sequence>
<gene>
    <name evidence="13" type="primary">Hrh1</name>
    <name evidence="9" type="synonym">Bphs</name>
</gene>
<proteinExistence type="evidence at protein level"/>
<accession>P70174</accession>
<accession>Q91V75</accession>
<accession>Q91XN0</accession>
<accession>Q91XN1</accession>
<accession>Q91XN2</accession>
<accession>Q91XN3</accession>
<organism>
    <name type="scientific">Mus musculus</name>
    <name type="common">Mouse</name>
    <dbReference type="NCBI Taxonomy" id="10090"/>
    <lineage>
        <taxon>Eukaryota</taxon>
        <taxon>Metazoa</taxon>
        <taxon>Chordata</taxon>
        <taxon>Craniata</taxon>
        <taxon>Vertebrata</taxon>
        <taxon>Euteleostomi</taxon>
        <taxon>Mammalia</taxon>
        <taxon>Eutheria</taxon>
        <taxon>Euarchontoglires</taxon>
        <taxon>Glires</taxon>
        <taxon>Rodentia</taxon>
        <taxon>Myomorpha</taxon>
        <taxon>Muroidea</taxon>
        <taxon>Muridae</taxon>
        <taxon>Murinae</taxon>
        <taxon>Mus</taxon>
        <taxon>Mus</taxon>
    </lineage>
</organism>